<reference key="1">
    <citation type="journal article" date="1996" name="Science">
        <title>Complete genome sequence of the methanogenic archaeon, Methanococcus jannaschii.</title>
        <authorList>
            <person name="Bult C.J."/>
            <person name="White O."/>
            <person name="Olsen G.J."/>
            <person name="Zhou L."/>
            <person name="Fleischmann R.D."/>
            <person name="Sutton G.G."/>
            <person name="Blake J.A."/>
            <person name="FitzGerald L.M."/>
            <person name="Clayton R.A."/>
            <person name="Gocayne J.D."/>
            <person name="Kerlavage A.R."/>
            <person name="Dougherty B.A."/>
            <person name="Tomb J.-F."/>
            <person name="Adams M.D."/>
            <person name="Reich C.I."/>
            <person name="Overbeek R."/>
            <person name="Kirkness E.F."/>
            <person name="Weinstock K.G."/>
            <person name="Merrick J.M."/>
            <person name="Glodek A."/>
            <person name="Scott J.L."/>
            <person name="Geoghagen N.S.M."/>
            <person name="Weidman J.F."/>
            <person name="Fuhrmann J.L."/>
            <person name="Nguyen D."/>
            <person name="Utterback T.R."/>
            <person name="Kelley J.M."/>
            <person name="Peterson J.D."/>
            <person name="Sadow P.W."/>
            <person name="Hanna M.C."/>
            <person name="Cotton M.D."/>
            <person name="Roberts K.M."/>
            <person name="Hurst M.A."/>
            <person name="Kaine B.P."/>
            <person name="Borodovsky M."/>
            <person name="Klenk H.-P."/>
            <person name="Fraser C.M."/>
            <person name="Smith H.O."/>
            <person name="Woese C.R."/>
            <person name="Venter J.C."/>
        </authorList>
    </citation>
    <scope>NUCLEOTIDE SEQUENCE [LARGE SCALE GENOMIC DNA]</scope>
    <source>
        <strain>ATCC 43067 / DSM 2661 / JAL-1 / JCM 10045 / NBRC 100440</strain>
    </source>
</reference>
<organism>
    <name type="scientific">Methanocaldococcus jannaschii (strain ATCC 43067 / DSM 2661 / JAL-1 / JCM 10045 / NBRC 100440)</name>
    <name type="common">Methanococcus jannaschii</name>
    <dbReference type="NCBI Taxonomy" id="243232"/>
    <lineage>
        <taxon>Archaea</taxon>
        <taxon>Methanobacteriati</taxon>
        <taxon>Methanobacteriota</taxon>
        <taxon>Methanomada group</taxon>
        <taxon>Methanococci</taxon>
        <taxon>Methanococcales</taxon>
        <taxon>Methanocaldococcaceae</taxon>
        <taxon>Methanocaldococcus</taxon>
    </lineage>
</organism>
<keyword id="KW-0238">DNA-binding</keyword>
<keyword id="KW-1185">Reference proteome</keyword>
<keyword id="KW-0804">Transcription</keyword>
<keyword id="KW-0805">Transcription regulation</keyword>
<comment type="similarity">
    <text evidence="2">Belongs to the LysR transcriptional regulatory family.</text>
</comment>
<sequence length="279" mass="32209">MKVDLTIEYRGKLITPNQIKLLIALHKTKSQNEAAKLLNIKPSSFNIQLKRLENKLGVKLYYSSPNGTVLTDAGLEILETYNSYSKRLKNHFFTVSGFVSGEIAKILFGNPIITSFDNALKLLKMGFVDVLGVDDSYWIYRLGDERFLKSEIGSCDFNIFLIAYDNFVMVSKKEFNYKNLVGIRFSSQRIVYNILKKEGIKFKVKVRVKNPFRAIELVNEGYSLFLNESLLRYIDGDFNVIYPNFYEKTVHAINFISFGKDIEIDKKEIKKIKKLGFKI</sequence>
<name>Y1120_METJA</name>
<gene>
    <name type="ordered locus">MJ1120</name>
</gene>
<accession>Q58520</accession>
<proteinExistence type="inferred from homology"/>
<feature type="chain" id="PRO_0000105832" description="Uncharacterized HTH-type transcriptional regulator MJ1120">
    <location>
        <begin position="1"/>
        <end position="279"/>
    </location>
</feature>
<feature type="domain" description="HTH lysR-type" evidence="1">
    <location>
        <begin position="14"/>
        <end position="71"/>
    </location>
</feature>
<feature type="DNA-binding region" description="H-T-H motif" evidence="1">
    <location>
        <begin position="31"/>
        <end position="50"/>
    </location>
</feature>
<dbReference type="EMBL" id="L77117">
    <property type="protein sequence ID" value="AAB99121.1"/>
    <property type="molecule type" value="Genomic_DNA"/>
</dbReference>
<dbReference type="PIR" id="G64439">
    <property type="entry name" value="G64439"/>
</dbReference>
<dbReference type="RefSeq" id="WP_010870631.1">
    <property type="nucleotide sequence ID" value="NC_000909.1"/>
</dbReference>
<dbReference type="SMR" id="Q58520"/>
<dbReference type="STRING" id="243232.MJ_1120"/>
<dbReference type="PaxDb" id="243232-MJ_1120"/>
<dbReference type="EnsemblBacteria" id="AAB99121">
    <property type="protein sequence ID" value="AAB99121"/>
    <property type="gene ID" value="MJ_1120"/>
</dbReference>
<dbReference type="GeneID" id="1452016"/>
<dbReference type="KEGG" id="mja:MJ_1120"/>
<dbReference type="eggNOG" id="arCOG00225">
    <property type="taxonomic scope" value="Archaea"/>
</dbReference>
<dbReference type="HOGENOM" id="CLU_992530_0_0_2"/>
<dbReference type="InParanoid" id="Q58520"/>
<dbReference type="OrthoDB" id="62169at2157"/>
<dbReference type="PhylomeDB" id="Q58520"/>
<dbReference type="Proteomes" id="UP000000805">
    <property type="component" value="Chromosome"/>
</dbReference>
<dbReference type="GO" id="GO:0003700">
    <property type="term" value="F:DNA-binding transcription factor activity"/>
    <property type="evidence" value="ECO:0007669"/>
    <property type="project" value="InterPro"/>
</dbReference>
<dbReference type="GO" id="GO:0000976">
    <property type="term" value="F:transcription cis-regulatory region binding"/>
    <property type="evidence" value="ECO:0000318"/>
    <property type="project" value="GO_Central"/>
</dbReference>
<dbReference type="GO" id="GO:0006355">
    <property type="term" value="P:regulation of DNA-templated transcription"/>
    <property type="evidence" value="ECO:0000318"/>
    <property type="project" value="GO_Central"/>
</dbReference>
<dbReference type="Gene3D" id="1.10.10.10">
    <property type="entry name" value="Winged helix-like DNA-binding domain superfamily/Winged helix DNA-binding domain"/>
    <property type="match status" value="1"/>
</dbReference>
<dbReference type="InterPro" id="IPR000847">
    <property type="entry name" value="Tscrpt_reg_HTH_LysR"/>
</dbReference>
<dbReference type="InterPro" id="IPR036388">
    <property type="entry name" value="WH-like_DNA-bd_sf"/>
</dbReference>
<dbReference type="InterPro" id="IPR036390">
    <property type="entry name" value="WH_DNA-bd_sf"/>
</dbReference>
<dbReference type="PANTHER" id="PTHR30126">
    <property type="entry name" value="HTH-TYPE TRANSCRIPTIONAL REGULATOR"/>
    <property type="match status" value="1"/>
</dbReference>
<dbReference type="PANTHER" id="PTHR30126:SF40">
    <property type="entry name" value="HTH-TYPE TRANSCRIPTIONAL REGULATOR GLTR"/>
    <property type="match status" value="1"/>
</dbReference>
<dbReference type="Pfam" id="PF00126">
    <property type="entry name" value="HTH_1"/>
    <property type="match status" value="1"/>
</dbReference>
<dbReference type="SUPFAM" id="SSF46785">
    <property type="entry name" value="Winged helix' DNA-binding domain"/>
    <property type="match status" value="1"/>
</dbReference>
<dbReference type="PROSITE" id="PS50931">
    <property type="entry name" value="HTH_LYSR"/>
    <property type="match status" value="1"/>
</dbReference>
<evidence type="ECO:0000255" key="1">
    <source>
        <dbReference type="PROSITE-ProRule" id="PRU00253"/>
    </source>
</evidence>
<evidence type="ECO:0000305" key="2"/>
<protein>
    <recommendedName>
        <fullName>Uncharacterized HTH-type transcriptional regulator MJ1120</fullName>
    </recommendedName>
</protein>